<dbReference type="EMBL" id="L19443">
    <property type="protein sequence ID" value="AAC13965.1"/>
    <property type="molecule type" value="Genomic_DNA"/>
</dbReference>
<dbReference type="EMBL" id="U14651">
    <property type="protein sequence ID" value="AAB19000.1"/>
    <property type="molecule type" value="Genomic_DNA"/>
</dbReference>
<dbReference type="DNASU" id="2715931"/>
<dbReference type="Proteomes" id="UP000151954">
    <property type="component" value="Segment"/>
</dbReference>
<dbReference type="GO" id="GO:0019013">
    <property type="term" value="C:viral nucleocapsid"/>
    <property type="evidence" value="ECO:0007669"/>
    <property type="project" value="InterPro"/>
</dbReference>
<dbReference type="GO" id="GO:0003677">
    <property type="term" value="F:DNA binding"/>
    <property type="evidence" value="ECO:0007669"/>
    <property type="project" value="UniProtKB-KW"/>
</dbReference>
<dbReference type="InterPro" id="IPR008393">
    <property type="entry name" value="Adenovirus_late_L2_mu_core"/>
</dbReference>
<dbReference type="Pfam" id="PF05829">
    <property type="entry name" value="Adeno_PX"/>
    <property type="match status" value="1"/>
</dbReference>
<organismHost>
    <name type="scientific">Homo sapiens</name>
    <name type="common">Human</name>
    <dbReference type="NCBI Taxonomy" id="9606"/>
</organismHost>
<feature type="propeptide" id="PRO_0000036525" evidence="1">
    <location>
        <begin position="1"/>
        <end position="26"/>
    </location>
</feature>
<feature type="peptide" id="PRO_0000036526" description="Late L2 mu core protein">
    <location>
        <begin position="27"/>
        <end position="40"/>
    </location>
</feature>
<feature type="propeptide" id="PRO_0000036527" evidence="1">
    <location>
        <begin position="41"/>
        <end position="70"/>
    </location>
</feature>
<feature type="site" description="Cleavage; by adenovirus protease" evidence="2">
    <location>
        <begin position="26"/>
        <end position="27"/>
    </location>
</feature>
<feature type="site" description="Cleavage; by adenovirus protease" evidence="2">
    <location>
        <begin position="40"/>
        <end position="41"/>
    </location>
</feature>
<feature type="sequence conflict" description="In Ref. 2; AAB19000." evidence="3" ref="2">
    <original>RA</original>
    <variation>PP</variation>
    <location>
        <begin position="31"/>
        <end position="32"/>
    </location>
</feature>
<evidence type="ECO:0000250" key="1"/>
<evidence type="ECO:0000255" key="2"/>
<evidence type="ECO:0000305" key="3"/>
<reference key="1">
    <citation type="journal article" date="1993" name="J. Mol. Biol.">
        <title>The DNA sequence of adenovirus type 40.</title>
        <authorList>
            <person name="Davison A.J."/>
            <person name="Telford E.A."/>
            <person name="Watson M.S."/>
            <person name="McBride K."/>
            <person name="Mautner V."/>
        </authorList>
    </citation>
    <scope>NUCLEOTIDE SEQUENCE [LARGE SCALE GENOMIC DNA]</scope>
    <source>
        <strain>Dugan</strain>
    </source>
</reference>
<reference key="2">
    <citation type="journal article" date="1996" name="J. Gen. Virol.">
        <title>Common epitope on protein VI of enteric adenoviruses from subgenera A and F.</title>
        <authorList>
            <person name="Grydsuk J.D."/>
            <person name="Fortsas E."/>
            <person name="Petric M."/>
            <person name="Brown M."/>
        </authorList>
    </citation>
    <scope>NUCLEOTIDE SEQUENCE [GENOMIC DNA]</scope>
    <source>
        <strain>Dugan</strain>
    </source>
</reference>
<comment type="function">
    <text evidence="1">The role of the precursor might be to condense the viral prochromatin for encapsidation by virtue of the two basic domains.</text>
</comment>
<comment type="subcellular location">
    <subcellularLocation>
        <location evidence="3">Virion</location>
    </subcellularLocation>
</comment>
<comment type="similarity">
    <text evidence="3">Belongs to the adenoviridae pX family.</text>
</comment>
<protein>
    <recommendedName>
        <fullName>Late L2 mu core protein</fullName>
    </recommendedName>
    <alternativeName>
        <fullName>Protein X</fullName>
        <shortName>pX</shortName>
    </alternativeName>
    <alternativeName>
        <fullName>pMu</fullName>
    </alternativeName>
</protein>
<proteinExistence type="inferred from homology"/>
<keyword id="KW-0238">DNA-binding</keyword>
<keyword id="KW-0426">Late protein</keyword>
<keyword id="KW-1185">Reference proteome</keyword>
<keyword id="KW-0946">Virion</keyword>
<name>L2MU_ADE40</name>
<accession>Q64858</accession>
<accession>Q67717</accession>
<gene>
    <name type="primary">PX</name>
</gene>
<sequence length="70" mass="7596">MALTCRFRIPVPSYRGRSRRRRGMAGSGRRRALRRRIKGGFLPALIPIIAAAIGAIPGVASVALQAARKQ</sequence>
<organism>
    <name type="scientific">Human adenovirus F serotype 40</name>
    <name type="common">HAdV-40</name>
    <name type="synonym">Human adenovirus 40</name>
    <dbReference type="NCBI Taxonomy" id="28284"/>
    <lineage>
        <taxon>Viruses</taxon>
        <taxon>Varidnaviria</taxon>
        <taxon>Bamfordvirae</taxon>
        <taxon>Preplasmiviricota</taxon>
        <taxon>Tectiliviricetes</taxon>
        <taxon>Rowavirales</taxon>
        <taxon>Adenoviridae</taxon>
        <taxon>Mastadenovirus</taxon>
        <taxon>Human mastadenovirus F</taxon>
    </lineage>
</organism>